<dbReference type="EMBL" id="AF498247">
    <property type="protein sequence ID" value="AAM22964.1"/>
    <property type="molecule type" value="mRNA"/>
</dbReference>
<dbReference type="EMBL" id="AF498248">
    <property type="protein sequence ID" value="AAM22965.1"/>
    <property type="molecule type" value="mRNA"/>
</dbReference>
<dbReference type="EMBL" id="AY049011">
    <property type="protein sequence ID" value="AAL06069.1"/>
    <property type="molecule type" value="Genomic_DNA"/>
</dbReference>
<dbReference type="EMBL" id="AY049011">
    <property type="protein sequence ID" value="AAL06070.1"/>
    <property type="molecule type" value="Genomic_DNA"/>
</dbReference>
<dbReference type="EMBL" id="AK134867">
    <property type="protein sequence ID" value="BAE22319.1"/>
    <property type="molecule type" value="mRNA"/>
</dbReference>
<dbReference type="EMBL" id="AC102334">
    <property type="status" value="NOT_ANNOTATED_CDS"/>
    <property type="molecule type" value="Genomic_DNA"/>
</dbReference>
<dbReference type="EMBL" id="BC128286">
    <property type="protein sequence ID" value="AAI28287.1"/>
    <property type="molecule type" value="mRNA"/>
</dbReference>
<dbReference type="CCDS" id="CCDS49675.1">
    <molecule id="Q8JZL2-1"/>
</dbReference>
<dbReference type="RefSeq" id="NP_660114.1">
    <molecule id="Q8JZL2-1"/>
    <property type="nucleotide sequence ID" value="NM_145132.2"/>
</dbReference>
<dbReference type="SMR" id="Q8JZL2"/>
<dbReference type="BioGRID" id="228932">
    <property type="interactions" value="12"/>
</dbReference>
<dbReference type="CORUM" id="Q8JZL2"/>
<dbReference type="FunCoup" id="Q8JZL2">
    <property type="interactions" value="555"/>
</dbReference>
<dbReference type="IntAct" id="Q8JZL2">
    <property type="interactions" value="1"/>
</dbReference>
<dbReference type="MINT" id="Q8JZL2"/>
<dbReference type="STRING" id="10090.ENSMUSP00000126191"/>
<dbReference type="BindingDB" id="Q8JZL2"/>
<dbReference type="ChEMBL" id="CHEMBL4730"/>
<dbReference type="GlyCosmos" id="Q8JZL2">
    <property type="glycosylation" value="3 sites, No reported glycans"/>
</dbReference>
<dbReference type="GlyGen" id="Q8JZL2">
    <property type="glycosylation" value="3 sites"/>
</dbReference>
<dbReference type="iPTMnet" id="Q8JZL2"/>
<dbReference type="PhosphoSitePlus" id="Q8JZL2"/>
<dbReference type="jPOST" id="Q8JZL2"/>
<dbReference type="PaxDb" id="10090-ENSMUSP00000126191"/>
<dbReference type="ProteomicsDB" id="292275">
    <molecule id="Q8JZL2-1"/>
</dbReference>
<dbReference type="ProteomicsDB" id="292276">
    <molecule id="Q8JZL2-2"/>
</dbReference>
<dbReference type="Antibodypedia" id="300">
    <property type="antibodies" value="320 antibodies from 33 providers"/>
</dbReference>
<dbReference type="DNASU" id="207911"/>
<dbReference type="Ensembl" id="ENSMUST00000166855.3">
    <molecule id="Q8JZL2-1"/>
    <property type="protein sequence ID" value="ENSMUSP00000126191.2"/>
    <property type="gene ID" value="ENSMUSG00000050164.12"/>
</dbReference>
<dbReference type="GeneID" id="207911"/>
<dbReference type="KEGG" id="mmu:207911"/>
<dbReference type="UCSC" id="uc007wwh.2">
    <molecule id="Q8JZL2-1"/>
    <property type="organism name" value="mouse"/>
</dbReference>
<dbReference type="AGR" id="MGI:2180756"/>
<dbReference type="CTD" id="2847"/>
<dbReference type="MGI" id="MGI:2180756">
    <property type="gene designation" value="Mchr1"/>
</dbReference>
<dbReference type="VEuPathDB" id="HostDB:ENSMUSG00000050164"/>
<dbReference type="eggNOG" id="KOG3656">
    <property type="taxonomic scope" value="Eukaryota"/>
</dbReference>
<dbReference type="GeneTree" id="ENSGT00940000154272"/>
<dbReference type="InParanoid" id="Q8JZL2"/>
<dbReference type="OMA" id="KSKFHGC"/>
<dbReference type="OrthoDB" id="6076970at2759"/>
<dbReference type="PhylomeDB" id="Q8JZL2"/>
<dbReference type="TreeFam" id="TF315737"/>
<dbReference type="Reactome" id="R-MMU-375276">
    <property type="pathway name" value="Peptide ligand-binding receptors"/>
</dbReference>
<dbReference type="Reactome" id="R-MMU-416476">
    <property type="pathway name" value="G alpha (q) signalling events"/>
</dbReference>
<dbReference type="Reactome" id="R-MMU-418594">
    <property type="pathway name" value="G alpha (i) signalling events"/>
</dbReference>
<dbReference type="Reactome" id="R-MMU-5620922">
    <property type="pathway name" value="BBSome-mediated cargo-targeting to cilium"/>
</dbReference>
<dbReference type="BioGRID-ORCS" id="207911">
    <property type="hits" value="5 hits in 80 CRISPR screens"/>
</dbReference>
<dbReference type="PRO" id="PR:Q8JZL2"/>
<dbReference type="Proteomes" id="UP000000589">
    <property type="component" value="Chromosome 15"/>
</dbReference>
<dbReference type="RNAct" id="Q8JZL2">
    <property type="molecule type" value="protein"/>
</dbReference>
<dbReference type="Bgee" id="ENSMUSG00000050164">
    <property type="expression patterns" value="Expressed in lumbar subsegment of spinal cord and 73 other cell types or tissues"/>
</dbReference>
<dbReference type="GO" id="GO:0060170">
    <property type="term" value="C:ciliary membrane"/>
    <property type="evidence" value="ECO:0000314"/>
    <property type="project" value="MGI"/>
</dbReference>
<dbReference type="GO" id="GO:0005929">
    <property type="term" value="C:cilium"/>
    <property type="evidence" value="ECO:0000266"/>
    <property type="project" value="MGI"/>
</dbReference>
<dbReference type="GO" id="GO:0043005">
    <property type="term" value="C:neuron projection"/>
    <property type="evidence" value="ECO:0000314"/>
    <property type="project" value="MGI"/>
</dbReference>
<dbReference type="GO" id="GO:0097730">
    <property type="term" value="C:non-motile cilium"/>
    <property type="evidence" value="ECO:0000314"/>
    <property type="project" value="BHF-UCL"/>
</dbReference>
<dbReference type="GO" id="GO:0005886">
    <property type="term" value="C:plasma membrane"/>
    <property type="evidence" value="ECO:0000314"/>
    <property type="project" value="MGI"/>
</dbReference>
<dbReference type="GO" id="GO:0042562">
    <property type="term" value="F:hormone binding"/>
    <property type="evidence" value="ECO:0007669"/>
    <property type="project" value="Ensembl"/>
</dbReference>
<dbReference type="GO" id="GO:0030273">
    <property type="term" value="F:melanin-concentrating hormone receptor activity"/>
    <property type="evidence" value="ECO:0007669"/>
    <property type="project" value="Ensembl"/>
</dbReference>
<dbReference type="GO" id="GO:0005102">
    <property type="term" value="F:signaling receptor binding"/>
    <property type="evidence" value="ECO:0000353"/>
    <property type="project" value="MGI"/>
</dbReference>
<dbReference type="GO" id="GO:0007166">
    <property type="term" value="P:cell surface receptor signaling pathway"/>
    <property type="evidence" value="ECO:0007669"/>
    <property type="project" value="Ensembl"/>
</dbReference>
<dbReference type="GO" id="GO:0007218">
    <property type="term" value="P:neuropeptide signaling pathway"/>
    <property type="evidence" value="ECO:0007669"/>
    <property type="project" value="InterPro"/>
</dbReference>
<dbReference type="GO" id="GO:0051928">
    <property type="term" value="P:positive regulation of calcium ion transport"/>
    <property type="evidence" value="ECO:0007669"/>
    <property type="project" value="Ensembl"/>
</dbReference>
<dbReference type="GO" id="GO:0007204">
    <property type="term" value="P:positive regulation of cytosolic calcium ion concentration"/>
    <property type="evidence" value="ECO:0007669"/>
    <property type="project" value="Ensembl"/>
</dbReference>
<dbReference type="GO" id="GO:0060259">
    <property type="term" value="P:regulation of feeding behavior"/>
    <property type="evidence" value="ECO:0000304"/>
    <property type="project" value="BHF-UCL"/>
</dbReference>
<dbReference type="CDD" id="cd15338">
    <property type="entry name" value="7tmA_MCHR1"/>
    <property type="match status" value="1"/>
</dbReference>
<dbReference type="FunFam" id="1.20.1070.10:FF:000115">
    <property type="entry name" value="Melanin-concentrating hormone receptor 1"/>
    <property type="match status" value="1"/>
</dbReference>
<dbReference type="Gene3D" id="1.20.1070.10">
    <property type="entry name" value="Rhodopsin 7-helix transmembrane proteins"/>
    <property type="match status" value="1"/>
</dbReference>
<dbReference type="InterPro" id="IPR000276">
    <property type="entry name" value="GPCR_Rhodpsn"/>
</dbReference>
<dbReference type="InterPro" id="IPR017452">
    <property type="entry name" value="GPCR_Rhodpsn_7TM"/>
</dbReference>
<dbReference type="InterPro" id="IPR008361">
    <property type="entry name" value="MCH_rcpt"/>
</dbReference>
<dbReference type="InterPro" id="IPR004047">
    <property type="entry name" value="MCHR1"/>
</dbReference>
<dbReference type="PANTHER" id="PTHR24229:SF91">
    <property type="entry name" value="MELANIN-CONCENTRATING HORMONE RECEPTOR 1"/>
    <property type="match status" value="1"/>
</dbReference>
<dbReference type="PANTHER" id="PTHR24229">
    <property type="entry name" value="NEUROPEPTIDES RECEPTOR"/>
    <property type="match status" value="1"/>
</dbReference>
<dbReference type="Pfam" id="PF00001">
    <property type="entry name" value="7tm_1"/>
    <property type="match status" value="1"/>
</dbReference>
<dbReference type="PRINTS" id="PR00237">
    <property type="entry name" value="GPCRRHODOPSN"/>
</dbReference>
<dbReference type="PRINTS" id="PR01507">
    <property type="entry name" value="MCH1RECEPTOR"/>
</dbReference>
<dbReference type="PRINTS" id="PR01783">
    <property type="entry name" value="MCHRECEPTOR"/>
</dbReference>
<dbReference type="SMART" id="SM01381">
    <property type="entry name" value="7TM_GPCR_Srsx"/>
    <property type="match status" value="1"/>
</dbReference>
<dbReference type="SUPFAM" id="SSF81321">
    <property type="entry name" value="Family A G protein-coupled receptor-like"/>
    <property type="match status" value="1"/>
</dbReference>
<dbReference type="PROSITE" id="PS50262">
    <property type="entry name" value="G_PROTEIN_RECEP_F1_2"/>
    <property type="match status" value="1"/>
</dbReference>
<sequence length="353" mass="39120">MDLQASLLSTGPNASNISDGQDNFTLAGPPPRTRSVSYINIIMPSVFGTICLLGIVGNSTVIFAVVKKSKLHWCSNVPDIFIINLSVVDLLFLLGMPFMIHQLMGNGVWHFGETMCTLITAMDANSQFTSTYILTAMAIDRYLATVHPISSTKFRKPSMATLVICLLWALSFISITPVWLYARLIPFPGGAVGCGIRLPNPDTDLYWFTLYQFFLAFALPFVVITAAYVKILQRMTSSVAPASQRSIRLRTKRVTRTAIAICLVFFVCWAPYYVLQLTQLSISRPTLTFVYLYNAAISLGYANSCLNPFVYIVLCETFRKRLVLSVKPAAQGQLRTVSNAQTADEERTESKGT</sequence>
<reference key="1">
    <citation type="journal article" date="2001" name="Endocrinology">
        <title>Melanin-concentrating hormone receptor is a target of leptin action in the mouse brain.</title>
        <authorList>
            <person name="Kokkotou E.G."/>
            <person name="Tritos N.A."/>
            <person name="Mastaitis J.W."/>
            <person name="Slieker L."/>
            <person name="Maratos-Flier E."/>
        </authorList>
    </citation>
    <scope>NUCLEOTIDE SEQUENCE [MRNA] (ISOFORM 1)</scope>
    <scope>TISSUE SPECIFICITY</scope>
    <source>
        <strain>C57BL/6J</strain>
        <tissue>Tail</tissue>
    </source>
</reference>
<reference key="2">
    <citation type="journal article" date="2001" name="Mamm. Genome">
        <title>High-throughput sequence identification of gene coding variants within alcohol-related QTLs.</title>
        <authorList>
            <person name="Ehringer M.A."/>
            <person name="Thompson J."/>
            <person name="Conroy O."/>
            <person name="Xu Y."/>
            <person name="Yang F."/>
            <person name="Canniff J."/>
            <person name="Beeson M."/>
            <person name="Gordon L."/>
            <person name="Bennett B."/>
            <person name="Johnson T.E."/>
            <person name="Sikela J.M."/>
        </authorList>
    </citation>
    <scope>NUCLEOTIDE SEQUENCE [MRNA] (ISOFORM 1)</scope>
    <source>
        <strain>ILS</strain>
        <strain>ISS</strain>
    </source>
</reference>
<reference key="3">
    <citation type="journal article" date="2004" name="Biochim. Biophys. Acta">
        <title>Promoter characterization of the mouse melanin-concentrating hormone receptor 1.</title>
        <authorList>
            <person name="Lakaye B."/>
            <person name="Adamantidis A."/>
            <person name="Coumans B."/>
            <person name="Grisar T."/>
        </authorList>
    </citation>
    <scope>NUCLEOTIDE SEQUENCE [GENOMIC DNA] (ISOFORMS 1 AND 2)</scope>
    <scope>ALTERNATIVE PROMOTER USAGE</scope>
    <source>
        <strain>129/SvJ</strain>
    </source>
</reference>
<reference key="4">
    <citation type="journal article" date="2005" name="Science">
        <title>The transcriptional landscape of the mammalian genome.</title>
        <authorList>
            <person name="Carninci P."/>
            <person name="Kasukawa T."/>
            <person name="Katayama S."/>
            <person name="Gough J."/>
            <person name="Frith M.C."/>
            <person name="Maeda N."/>
            <person name="Oyama R."/>
            <person name="Ravasi T."/>
            <person name="Lenhard B."/>
            <person name="Wells C."/>
            <person name="Kodzius R."/>
            <person name="Shimokawa K."/>
            <person name="Bajic V.B."/>
            <person name="Brenner S.E."/>
            <person name="Batalov S."/>
            <person name="Forrest A.R."/>
            <person name="Zavolan M."/>
            <person name="Davis M.J."/>
            <person name="Wilming L.G."/>
            <person name="Aidinis V."/>
            <person name="Allen J.E."/>
            <person name="Ambesi-Impiombato A."/>
            <person name="Apweiler R."/>
            <person name="Aturaliya R.N."/>
            <person name="Bailey T.L."/>
            <person name="Bansal M."/>
            <person name="Baxter L."/>
            <person name="Beisel K.W."/>
            <person name="Bersano T."/>
            <person name="Bono H."/>
            <person name="Chalk A.M."/>
            <person name="Chiu K.P."/>
            <person name="Choudhary V."/>
            <person name="Christoffels A."/>
            <person name="Clutterbuck D.R."/>
            <person name="Crowe M.L."/>
            <person name="Dalla E."/>
            <person name="Dalrymple B.P."/>
            <person name="de Bono B."/>
            <person name="Della Gatta G."/>
            <person name="di Bernardo D."/>
            <person name="Down T."/>
            <person name="Engstrom P."/>
            <person name="Fagiolini M."/>
            <person name="Faulkner G."/>
            <person name="Fletcher C.F."/>
            <person name="Fukushima T."/>
            <person name="Furuno M."/>
            <person name="Futaki S."/>
            <person name="Gariboldi M."/>
            <person name="Georgii-Hemming P."/>
            <person name="Gingeras T.R."/>
            <person name="Gojobori T."/>
            <person name="Green R.E."/>
            <person name="Gustincich S."/>
            <person name="Harbers M."/>
            <person name="Hayashi Y."/>
            <person name="Hensch T.K."/>
            <person name="Hirokawa N."/>
            <person name="Hill D."/>
            <person name="Huminiecki L."/>
            <person name="Iacono M."/>
            <person name="Ikeo K."/>
            <person name="Iwama A."/>
            <person name="Ishikawa T."/>
            <person name="Jakt M."/>
            <person name="Kanapin A."/>
            <person name="Katoh M."/>
            <person name="Kawasawa Y."/>
            <person name="Kelso J."/>
            <person name="Kitamura H."/>
            <person name="Kitano H."/>
            <person name="Kollias G."/>
            <person name="Krishnan S.P."/>
            <person name="Kruger A."/>
            <person name="Kummerfeld S.K."/>
            <person name="Kurochkin I.V."/>
            <person name="Lareau L.F."/>
            <person name="Lazarevic D."/>
            <person name="Lipovich L."/>
            <person name="Liu J."/>
            <person name="Liuni S."/>
            <person name="McWilliam S."/>
            <person name="Madan Babu M."/>
            <person name="Madera M."/>
            <person name="Marchionni L."/>
            <person name="Matsuda H."/>
            <person name="Matsuzawa S."/>
            <person name="Miki H."/>
            <person name="Mignone F."/>
            <person name="Miyake S."/>
            <person name="Morris K."/>
            <person name="Mottagui-Tabar S."/>
            <person name="Mulder N."/>
            <person name="Nakano N."/>
            <person name="Nakauchi H."/>
            <person name="Ng P."/>
            <person name="Nilsson R."/>
            <person name="Nishiguchi S."/>
            <person name="Nishikawa S."/>
            <person name="Nori F."/>
            <person name="Ohara O."/>
            <person name="Okazaki Y."/>
            <person name="Orlando V."/>
            <person name="Pang K.C."/>
            <person name="Pavan W.J."/>
            <person name="Pavesi G."/>
            <person name="Pesole G."/>
            <person name="Petrovsky N."/>
            <person name="Piazza S."/>
            <person name="Reed J."/>
            <person name="Reid J.F."/>
            <person name="Ring B.Z."/>
            <person name="Ringwald M."/>
            <person name="Rost B."/>
            <person name="Ruan Y."/>
            <person name="Salzberg S.L."/>
            <person name="Sandelin A."/>
            <person name="Schneider C."/>
            <person name="Schoenbach C."/>
            <person name="Sekiguchi K."/>
            <person name="Semple C.A."/>
            <person name="Seno S."/>
            <person name="Sessa L."/>
            <person name="Sheng Y."/>
            <person name="Shibata Y."/>
            <person name="Shimada H."/>
            <person name="Shimada K."/>
            <person name="Silva D."/>
            <person name="Sinclair B."/>
            <person name="Sperling S."/>
            <person name="Stupka E."/>
            <person name="Sugiura K."/>
            <person name="Sultana R."/>
            <person name="Takenaka Y."/>
            <person name="Taki K."/>
            <person name="Tammoja K."/>
            <person name="Tan S.L."/>
            <person name="Tang S."/>
            <person name="Taylor M.S."/>
            <person name="Tegner J."/>
            <person name="Teichmann S.A."/>
            <person name="Ueda H.R."/>
            <person name="van Nimwegen E."/>
            <person name="Verardo R."/>
            <person name="Wei C.L."/>
            <person name="Yagi K."/>
            <person name="Yamanishi H."/>
            <person name="Zabarovsky E."/>
            <person name="Zhu S."/>
            <person name="Zimmer A."/>
            <person name="Hide W."/>
            <person name="Bult C."/>
            <person name="Grimmond S.M."/>
            <person name="Teasdale R.D."/>
            <person name="Liu E.T."/>
            <person name="Brusic V."/>
            <person name="Quackenbush J."/>
            <person name="Wahlestedt C."/>
            <person name="Mattick J.S."/>
            <person name="Hume D.A."/>
            <person name="Kai C."/>
            <person name="Sasaki D."/>
            <person name="Tomaru Y."/>
            <person name="Fukuda S."/>
            <person name="Kanamori-Katayama M."/>
            <person name="Suzuki M."/>
            <person name="Aoki J."/>
            <person name="Arakawa T."/>
            <person name="Iida J."/>
            <person name="Imamura K."/>
            <person name="Itoh M."/>
            <person name="Kato T."/>
            <person name="Kawaji H."/>
            <person name="Kawagashira N."/>
            <person name="Kawashima T."/>
            <person name="Kojima M."/>
            <person name="Kondo S."/>
            <person name="Konno H."/>
            <person name="Nakano K."/>
            <person name="Ninomiya N."/>
            <person name="Nishio T."/>
            <person name="Okada M."/>
            <person name="Plessy C."/>
            <person name="Shibata K."/>
            <person name="Shiraki T."/>
            <person name="Suzuki S."/>
            <person name="Tagami M."/>
            <person name="Waki K."/>
            <person name="Watahiki A."/>
            <person name="Okamura-Oho Y."/>
            <person name="Suzuki H."/>
            <person name="Kawai J."/>
            <person name="Hayashizaki Y."/>
        </authorList>
    </citation>
    <scope>NUCLEOTIDE SEQUENCE [LARGE SCALE MRNA] (ISOFORM 1)</scope>
</reference>
<reference key="5">
    <citation type="journal article" date="2009" name="PLoS Biol.">
        <title>Lineage-specific biology revealed by a finished genome assembly of the mouse.</title>
        <authorList>
            <person name="Church D.M."/>
            <person name="Goodstadt L."/>
            <person name="Hillier L.W."/>
            <person name="Zody M.C."/>
            <person name="Goldstein S."/>
            <person name="She X."/>
            <person name="Bult C.J."/>
            <person name="Agarwala R."/>
            <person name="Cherry J.L."/>
            <person name="DiCuccio M."/>
            <person name="Hlavina W."/>
            <person name="Kapustin Y."/>
            <person name="Meric P."/>
            <person name="Maglott D."/>
            <person name="Birtle Z."/>
            <person name="Marques A.C."/>
            <person name="Graves T."/>
            <person name="Zhou S."/>
            <person name="Teague B."/>
            <person name="Potamousis K."/>
            <person name="Churas C."/>
            <person name="Place M."/>
            <person name="Herschleb J."/>
            <person name="Runnheim R."/>
            <person name="Forrest D."/>
            <person name="Amos-Landgraf J."/>
            <person name="Schwartz D.C."/>
            <person name="Cheng Z."/>
            <person name="Lindblad-Toh K."/>
            <person name="Eichler E.E."/>
            <person name="Ponting C.P."/>
        </authorList>
    </citation>
    <scope>NUCLEOTIDE SEQUENCE [LARGE SCALE GENOMIC DNA]</scope>
    <source>
        <strain>C57BL/6J</strain>
    </source>
</reference>
<reference key="6">
    <citation type="journal article" date="2004" name="Genome Res.">
        <title>The status, quality, and expansion of the NIH full-length cDNA project: the Mammalian Gene Collection (MGC).</title>
        <authorList>
            <consortium name="The MGC Project Team"/>
        </authorList>
    </citation>
    <scope>NUCLEOTIDE SEQUENCE [LARGE SCALE MRNA] (ISOFORM 1)</scope>
</reference>
<name>MCHR1_MOUSE</name>
<gene>
    <name evidence="8" type="primary">Mchr1</name>
    <name type="synonym">Gpr24</name>
    <name type="synonym">Slc1</name>
</gene>
<keyword id="KW-0877">Alternative promoter usage</keyword>
<keyword id="KW-1003">Cell membrane</keyword>
<keyword id="KW-1015">Disulfide bond</keyword>
<keyword id="KW-0297">G-protein coupled receptor</keyword>
<keyword id="KW-0325">Glycoprotein</keyword>
<keyword id="KW-0472">Membrane</keyword>
<keyword id="KW-0675">Receptor</keyword>
<keyword id="KW-1185">Reference proteome</keyword>
<keyword id="KW-0807">Transducer</keyword>
<keyword id="KW-0812">Transmembrane</keyword>
<keyword id="KW-1133">Transmembrane helix</keyword>
<proteinExistence type="evidence at protein level"/>
<accession>Q8JZL2</accession>
<accession>Q3UY93</accession>
<accession>Q8K3M8</accession>
<evidence type="ECO:0000250" key="1">
    <source>
        <dbReference type="UniProtKB" id="Q99705"/>
    </source>
</evidence>
<evidence type="ECO:0000255" key="2"/>
<evidence type="ECO:0000255" key="3">
    <source>
        <dbReference type="PROSITE-ProRule" id="PRU00521"/>
    </source>
</evidence>
<evidence type="ECO:0000269" key="4">
    <source>
    </source>
</evidence>
<evidence type="ECO:0000303" key="5">
    <source>
    </source>
</evidence>
<evidence type="ECO:0000303" key="6">
    <source>
    </source>
</evidence>
<evidence type="ECO:0000305" key="7"/>
<evidence type="ECO:0000312" key="8">
    <source>
        <dbReference type="MGI" id="MGI:2180756"/>
    </source>
</evidence>
<comment type="function">
    <text evidence="1">Receptor for melanin-concentrating hormone, coupled to both G proteins that inhibit adenylyl cyclase and G proteins that activate phosphoinositide hydrolysis.</text>
</comment>
<comment type="subunit">
    <text evidence="1">Interacts with NCDN.</text>
</comment>
<comment type="interaction">
    <interactant intactId="EBI-44454520">
        <id>Q8JZL2</id>
    </interactant>
    <interactant intactId="EBI-44454554">
        <id>D3Z1Q2</id>
        <label>Mrap2</label>
    </interactant>
    <organismsDiffer>false</organismsDiffer>
    <experiments>4</experiments>
</comment>
<comment type="subcellular location">
    <subcellularLocation>
        <location evidence="1">Cell membrane</location>
        <topology evidence="2">Multi-pass membrane protein</topology>
    </subcellularLocation>
</comment>
<comment type="alternative products">
    <event type="alternative promoter"/>
    <isoform>
        <id>Q8JZL2-1</id>
        <name>1</name>
        <sequence type="displayed"/>
    </isoform>
    <isoform>
        <id>Q8JZL2-2</id>
        <name>2</name>
        <sequence type="described" ref="VSP_059222"/>
    </isoform>
</comment>
<comment type="tissue specificity">
    <text evidence="4">Expressed predominantly in the brain. Expression in brain is negatively regulated by leptin. Also found in the epithelium of the tongue and kidney.</text>
</comment>
<comment type="similarity">
    <text evidence="3">Belongs to the G-protein coupled receptor 1 family.</text>
</comment>
<feature type="chain" id="PRO_0000069736" description="Melanin-concentrating hormone receptor 1">
    <location>
        <begin position="1"/>
        <end position="353"/>
    </location>
</feature>
<feature type="topological domain" description="Extracellular" evidence="7">
    <location>
        <begin position="1"/>
        <end position="45"/>
    </location>
</feature>
<feature type="transmembrane region" description="Helical; Name=1" evidence="2">
    <location>
        <begin position="46"/>
        <end position="66"/>
    </location>
</feature>
<feature type="topological domain" description="Cytoplasmic" evidence="7">
    <location>
        <begin position="67"/>
        <end position="79"/>
    </location>
</feature>
<feature type="transmembrane region" description="Helical; Name=2" evidence="2">
    <location>
        <begin position="80"/>
        <end position="100"/>
    </location>
</feature>
<feature type="topological domain" description="Extracellular" evidence="7">
    <location>
        <begin position="101"/>
        <end position="116"/>
    </location>
</feature>
<feature type="transmembrane region" description="Helical; Name=3" evidence="2">
    <location>
        <begin position="117"/>
        <end position="139"/>
    </location>
</feature>
<feature type="topological domain" description="Cytoplasmic" evidence="7">
    <location>
        <begin position="140"/>
        <end position="161"/>
    </location>
</feature>
<feature type="transmembrane region" description="Helical; Name=4" evidence="2">
    <location>
        <begin position="162"/>
        <end position="182"/>
    </location>
</feature>
<feature type="topological domain" description="Extracellular" evidence="7">
    <location>
        <begin position="183"/>
        <end position="204"/>
    </location>
</feature>
<feature type="transmembrane region" description="Helical; Name=5" evidence="2">
    <location>
        <begin position="205"/>
        <end position="225"/>
    </location>
</feature>
<feature type="topological domain" description="Cytoplasmic" evidence="7">
    <location>
        <begin position="226"/>
        <end position="256"/>
    </location>
</feature>
<feature type="transmembrane region" description="Helical; Name=6" evidence="2">
    <location>
        <begin position="257"/>
        <end position="277"/>
    </location>
</feature>
<feature type="topological domain" description="Extracellular" evidence="7">
    <location>
        <begin position="278"/>
        <end position="294"/>
    </location>
</feature>
<feature type="transmembrane region" description="Helical; Name=7" evidence="2">
    <location>
        <begin position="295"/>
        <end position="315"/>
    </location>
</feature>
<feature type="topological domain" description="Cytoplasmic" evidence="7">
    <location>
        <begin position="316"/>
        <end position="353"/>
    </location>
</feature>
<feature type="glycosylation site" description="N-linked (GlcNAc...) asparagine" evidence="2">
    <location>
        <position position="13"/>
    </location>
</feature>
<feature type="glycosylation site" description="N-linked (GlcNAc...) asparagine" evidence="2">
    <location>
        <position position="16"/>
    </location>
</feature>
<feature type="glycosylation site" description="N-linked (GlcNAc...) asparagine" evidence="2">
    <location>
        <position position="23"/>
    </location>
</feature>
<feature type="disulfide bond" evidence="3">
    <location>
        <begin position="116"/>
        <end position="194"/>
    </location>
</feature>
<feature type="splice variant" id="VSP_059222" description="In isoform 2." evidence="6">
    <original>MDLQASLLSTGPNASNISDGQDNFTLA</original>
    <variation>MRGQQEGRHGRLSASRSEGGSHLLFLSS</variation>
    <location>
        <begin position="1"/>
        <end position="27"/>
    </location>
</feature>
<organism>
    <name type="scientific">Mus musculus</name>
    <name type="common">Mouse</name>
    <dbReference type="NCBI Taxonomy" id="10090"/>
    <lineage>
        <taxon>Eukaryota</taxon>
        <taxon>Metazoa</taxon>
        <taxon>Chordata</taxon>
        <taxon>Craniata</taxon>
        <taxon>Vertebrata</taxon>
        <taxon>Euteleostomi</taxon>
        <taxon>Mammalia</taxon>
        <taxon>Eutheria</taxon>
        <taxon>Euarchontoglires</taxon>
        <taxon>Glires</taxon>
        <taxon>Rodentia</taxon>
        <taxon>Myomorpha</taxon>
        <taxon>Muroidea</taxon>
        <taxon>Muridae</taxon>
        <taxon>Murinae</taxon>
        <taxon>Mus</taxon>
        <taxon>Mus</taxon>
    </lineage>
</organism>
<protein>
    <recommendedName>
        <fullName evidence="7">Melanin-concentrating hormone receptor 1</fullName>
        <shortName>MCH receptor 1</shortName>
        <shortName>MCH-R1</shortName>
        <shortName>MCHR-1</shortName>
    </recommendedName>
    <alternativeName>
        <fullName>G-protein coupled receptor 24</fullName>
    </alternativeName>
    <alternativeName>
        <fullName>MCH-1R</fullName>
        <shortName>MCH1R</shortName>
        <shortName>MCHR</shortName>
    </alternativeName>
    <alternativeName>
        <fullName evidence="5">SLC-1</fullName>
    </alternativeName>
    <alternativeName>
        <fullName>Somatostatin receptor-like protein</fullName>
    </alternativeName>
</protein>